<accession>P13697</accession>
<dbReference type="EC" id="1.1.1.40" evidence="4"/>
<dbReference type="EMBL" id="M26594">
    <property type="protein sequence ID" value="AAA41563.1"/>
    <property type="status" value="ALT_SEQ"/>
    <property type="molecule type" value="Genomic_DNA"/>
</dbReference>
<dbReference type="EMBL" id="M26581">
    <property type="protein sequence ID" value="AAA41563.1"/>
    <property type="status" value="JOINED"/>
    <property type="molecule type" value="Genomic_DNA"/>
</dbReference>
<dbReference type="EMBL" id="M26582">
    <property type="protein sequence ID" value="AAA41563.1"/>
    <property type="status" value="JOINED"/>
    <property type="molecule type" value="Genomic_DNA"/>
</dbReference>
<dbReference type="EMBL" id="M26583">
    <property type="protein sequence ID" value="AAA41563.1"/>
    <property type="status" value="JOINED"/>
    <property type="molecule type" value="Genomic_DNA"/>
</dbReference>
<dbReference type="EMBL" id="M26584">
    <property type="protein sequence ID" value="AAA41563.1"/>
    <property type="status" value="JOINED"/>
    <property type="molecule type" value="Genomic_DNA"/>
</dbReference>
<dbReference type="EMBL" id="M26585">
    <property type="protein sequence ID" value="AAA41563.1"/>
    <property type="status" value="JOINED"/>
    <property type="molecule type" value="Genomic_DNA"/>
</dbReference>
<dbReference type="EMBL" id="M26586">
    <property type="protein sequence ID" value="AAA41563.1"/>
    <property type="status" value="JOINED"/>
    <property type="molecule type" value="Genomic_DNA"/>
</dbReference>
<dbReference type="EMBL" id="M26587">
    <property type="protein sequence ID" value="AAA41563.1"/>
    <property type="status" value="JOINED"/>
    <property type="molecule type" value="Genomic_DNA"/>
</dbReference>
<dbReference type="EMBL" id="M26588">
    <property type="protein sequence ID" value="AAA41563.1"/>
    <property type="status" value="JOINED"/>
    <property type="molecule type" value="Genomic_DNA"/>
</dbReference>
<dbReference type="EMBL" id="M26589">
    <property type="protein sequence ID" value="AAA41563.1"/>
    <property type="status" value="JOINED"/>
    <property type="molecule type" value="Genomic_DNA"/>
</dbReference>
<dbReference type="EMBL" id="M26590">
    <property type="protein sequence ID" value="AAA41563.1"/>
    <property type="status" value="JOINED"/>
    <property type="molecule type" value="Genomic_DNA"/>
</dbReference>
<dbReference type="EMBL" id="M26591">
    <property type="protein sequence ID" value="AAA41563.1"/>
    <property type="status" value="JOINED"/>
    <property type="molecule type" value="Genomic_DNA"/>
</dbReference>
<dbReference type="EMBL" id="M26592">
    <property type="protein sequence ID" value="AAA41563.1"/>
    <property type="status" value="JOINED"/>
    <property type="molecule type" value="Genomic_DNA"/>
</dbReference>
<dbReference type="EMBL" id="M26593">
    <property type="protein sequence ID" value="AAA41563.1"/>
    <property type="status" value="JOINED"/>
    <property type="molecule type" value="Genomic_DNA"/>
</dbReference>
<dbReference type="PIR" id="A37228">
    <property type="entry name" value="DERTMX"/>
</dbReference>
<dbReference type="SMR" id="P13697"/>
<dbReference type="FunCoup" id="P13697">
    <property type="interactions" value="2171"/>
</dbReference>
<dbReference type="STRING" id="10116.ENSRNOP00000071968"/>
<dbReference type="ChEMBL" id="CHEMBL2293"/>
<dbReference type="iPTMnet" id="P13697"/>
<dbReference type="PhosphoSitePlus" id="P13697"/>
<dbReference type="jPOST" id="P13697"/>
<dbReference type="PaxDb" id="10116-ENSRNOP00000013244"/>
<dbReference type="UCSC" id="RGD:3074">
    <property type="organism name" value="rat"/>
</dbReference>
<dbReference type="AGR" id="RGD:3074"/>
<dbReference type="RGD" id="3074">
    <property type="gene designation" value="Me1"/>
</dbReference>
<dbReference type="eggNOG" id="KOG1257">
    <property type="taxonomic scope" value="Eukaryota"/>
</dbReference>
<dbReference type="InParanoid" id="P13697"/>
<dbReference type="PhylomeDB" id="P13697"/>
<dbReference type="Reactome" id="R-RNO-70268">
    <property type="pathway name" value="Pyruvate metabolism"/>
</dbReference>
<dbReference type="Reactome" id="R-RNO-9861718">
    <property type="pathway name" value="Regulation of pyruvate metabolism"/>
</dbReference>
<dbReference type="SABIO-RK" id="P13697"/>
<dbReference type="PRO" id="PR:P13697"/>
<dbReference type="Proteomes" id="UP000002494">
    <property type="component" value="Unplaced"/>
</dbReference>
<dbReference type="GO" id="GO:0005737">
    <property type="term" value="C:cytoplasm"/>
    <property type="evidence" value="ECO:0000266"/>
    <property type="project" value="RGD"/>
</dbReference>
<dbReference type="GO" id="GO:0005829">
    <property type="term" value="C:cytosol"/>
    <property type="evidence" value="ECO:0000314"/>
    <property type="project" value="UniProtKB"/>
</dbReference>
<dbReference type="GO" id="GO:0005739">
    <property type="term" value="C:mitochondrion"/>
    <property type="evidence" value="ECO:0000314"/>
    <property type="project" value="CACAO"/>
</dbReference>
<dbReference type="GO" id="GO:0042802">
    <property type="term" value="F:identical protein binding"/>
    <property type="evidence" value="ECO:0000266"/>
    <property type="project" value="RGD"/>
</dbReference>
<dbReference type="GO" id="GO:0000287">
    <property type="term" value="F:magnesium ion binding"/>
    <property type="evidence" value="ECO:0000250"/>
    <property type="project" value="UniProtKB"/>
</dbReference>
<dbReference type="GO" id="GO:0004473">
    <property type="term" value="F:malate dehydrogenase (decarboxylating) (NADP+) activity"/>
    <property type="evidence" value="ECO:0000314"/>
    <property type="project" value="UniProtKB"/>
</dbReference>
<dbReference type="GO" id="GO:0004470">
    <property type="term" value="F:malic enzyme activity"/>
    <property type="evidence" value="ECO:0000314"/>
    <property type="project" value="RGD"/>
</dbReference>
<dbReference type="GO" id="GO:0030145">
    <property type="term" value="F:manganese ion binding"/>
    <property type="evidence" value="ECO:0000250"/>
    <property type="project" value="UniProtKB"/>
</dbReference>
<dbReference type="GO" id="GO:0051287">
    <property type="term" value="F:NAD binding"/>
    <property type="evidence" value="ECO:0007669"/>
    <property type="project" value="InterPro"/>
</dbReference>
<dbReference type="GO" id="GO:0050661">
    <property type="term" value="F:NADP binding"/>
    <property type="evidence" value="ECO:0000314"/>
    <property type="project" value="RGD"/>
</dbReference>
<dbReference type="GO" id="GO:0008948">
    <property type="term" value="F:oxaloacetate decarboxylase activity"/>
    <property type="evidence" value="ECO:0000250"/>
    <property type="project" value="UniProtKB"/>
</dbReference>
<dbReference type="GO" id="GO:0006108">
    <property type="term" value="P:malate metabolic process"/>
    <property type="evidence" value="ECO:0000250"/>
    <property type="project" value="UniProtKB"/>
</dbReference>
<dbReference type="GO" id="GO:0006734">
    <property type="term" value="P:NADH metabolic process"/>
    <property type="evidence" value="ECO:0000266"/>
    <property type="project" value="RGD"/>
</dbReference>
<dbReference type="GO" id="GO:0006739">
    <property type="term" value="P:NADP metabolic process"/>
    <property type="evidence" value="ECO:0000266"/>
    <property type="project" value="RGD"/>
</dbReference>
<dbReference type="GO" id="GO:0051289">
    <property type="term" value="P:protein homotetramerization"/>
    <property type="evidence" value="ECO:0000250"/>
    <property type="project" value="UniProtKB"/>
</dbReference>
<dbReference type="GO" id="GO:0006090">
    <property type="term" value="P:pyruvate metabolic process"/>
    <property type="evidence" value="ECO:0000318"/>
    <property type="project" value="GO_Central"/>
</dbReference>
<dbReference type="GO" id="GO:1902031">
    <property type="term" value="P:regulation of NADP metabolic process"/>
    <property type="evidence" value="ECO:0000266"/>
    <property type="project" value="RGD"/>
</dbReference>
<dbReference type="GO" id="GO:0009725">
    <property type="term" value="P:response to hormone"/>
    <property type="evidence" value="ECO:0000314"/>
    <property type="project" value="UniProtKB"/>
</dbReference>
<dbReference type="CDD" id="cd05312">
    <property type="entry name" value="NAD_bind_1_malic_enz"/>
    <property type="match status" value="1"/>
</dbReference>
<dbReference type="FunFam" id="3.40.50.10380:FF:000004">
    <property type="entry name" value="Malic enzyme"/>
    <property type="match status" value="1"/>
</dbReference>
<dbReference type="FunFam" id="3.40.50.720:FF:000060">
    <property type="entry name" value="Malic enzyme"/>
    <property type="match status" value="1"/>
</dbReference>
<dbReference type="Gene3D" id="3.40.50.10380">
    <property type="entry name" value="Malic enzyme, N-terminal domain"/>
    <property type="match status" value="1"/>
</dbReference>
<dbReference type="Gene3D" id="3.40.50.720">
    <property type="entry name" value="NAD(P)-binding Rossmann-like Domain"/>
    <property type="match status" value="1"/>
</dbReference>
<dbReference type="InterPro" id="IPR046346">
    <property type="entry name" value="Aminoacid_DH-like_N_sf"/>
</dbReference>
<dbReference type="InterPro" id="IPR015884">
    <property type="entry name" value="Malic_enzyme_CS"/>
</dbReference>
<dbReference type="InterPro" id="IPR012301">
    <property type="entry name" value="Malic_N_dom"/>
</dbReference>
<dbReference type="InterPro" id="IPR037062">
    <property type="entry name" value="Malic_N_dom_sf"/>
</dbReference>
<dbReference type="InterPro" id="IPR012302">
    <property type="entry name" value="Malic_NAD-bd"/>
</dbReference>
<dbReference type="InterPro" id="IPR001891">
    <property type="entry name" value="Malic_OxRdtase"/>
</dbReference>
<dbReference type="InterPro" id="IPR036291">
    <property type="entry name" value="NAD(P)-bd_dom_sf"/>
</dbReference>
<dbReference type="NCBIfam" id="NF010052">
    <property type="entry name" value="PRK13529.1"/>
    <property type="match status" value="1"/>
</dbReference>
<dbReference type="PANTHER" id="PTHR23406">
    <property type="entry name" value="MALIC ENZYME-RELATED"/>
    <property type="match status" value="1"/>
</dbReference>
<dbReference type="PANTHER" id="PTHR23406:SF17">
    <property type="entry name" value="NADP-DEPENDENT MALIC ENZYME"/>
    <property type="match status" value="1"/>
</dbReference>
<dbReference type="Pfam" id="PF00390">
    <property type="entry name" value="malic"/>
    <property type="match status" value="1"/>
</dbReference>
<dbReference type="Pfam" id="PF03949">
    <property type="entry name" value="Malic_M"/>
    <property type="match status" value="1"/>
</dbReference>
<dbReference type="PIRSF" id="PIRSF000106">
    <property type="entry name" value="ME"/>
    <property type="match status" value="1"/>
</dbReference>
<dbReference type="PRINTS" id="PR00072">
    <property type="entry name" value="MALOXRDTASE"/>
</dbReference>
<dbReference type="SMART" id="SM01274">
    <property type="entry name" value="malic"/>
    <property type="match status" value="1"/>
</dbReference>
<dbReference type="SMART" id="SM00919">
    <property type="entry name" value="Malic_M"/>
    <property type="match status" value="1"/>
</dbReference>
<dbReference type="SUPFAM" id="SSF53223">
    <property type="entry name" value="Aminoacid dehydrogenase-like, N-terminal domain"/>
    <property type="match status" value="1"/>
</dbReference>
<dbReference type="SUPFAM" id="SSF51735">
    <property type="entry name" value="NAD(P)-binding Rossmann-fold domains"/>
    <property type="match status" value="1"/>
</dbReference>
<dbReference type="PROSITE" id="PS00331">
    <property type="entry name" value="MALIC_ENZYMES"/>
    <property type="match status" value="1"/>
</dbReference>
<feature type="chain" id="PRO_0000160195" description="NADP-dependent malic enzyme">
    <location>
        <begin position="1"/>
        <end position="572"/>
    </location>
</feature>
<feature type="active site" description="Proton donor" evidence="2">
    <location>
        <position position="102"/>
    </location>
</feature>
<feature type="active site" description="Proton acceptor" evidence="2">
    <location>
        <position position="173"/>
    </location>
</feature>
<feature type="binding site" evidence="1">
    <location>
        <position position="155"/>
    </location>
    <ligand>
        <name>NADP(+)</name>
        <dbReference type="ChEBI" id="CHEBI:58349"/>
    </ligand>
</feature>
<feature type="binding site" evidence="2">
    <location>
        <position position="245"/>
    </location>
    <ligand>
        <name>a divalent metal cation</name>
        <dbReference type="ChEBI" id="CHEBI:60240"/>
    </ligand>
</feature>
<feature type="binding site" evidence="2">
    <location>
        <position position="246"/>
    </location>
    <ligand>
        <name>a divalent metal cation</name>
        <dbReference type="ChEBI" id="CHEBI:60240"/>
    </ligand>
</feature>
<feature type="binding site" evidence="2">
    <location>
        <position position="269"/>
    </location>
    <ligand>
        <name>a divalent metal cation</name>
        <dbReference type="ChEBI" id="CHEBI:60240"/>
    </ligand>
</feature>
<feature type="binding site" evidence="1">
    <location>
        <position position="269"/>
    </location>
    <ligand>
        <name>NADP(+)</name>
        <dbReference type="ChEBI" id="CHEBI:58349"/>
    </ligand>
</feature>
<feature type="binding site" evidence="1">
    <location>
        <begin position="301"/>
        <end position="318"/>
    </location>
    <ligand>
        <name>NADP(+)</name>
        <dbReference type="ChEBI" id="CHEBI:58349"/>
    </ligand>
</feature>
<feature type="binding site" evidence="1">
    <location>
        <position position="408"/>
    </location>
    <ligand>
        <name>NADP(+)</name>
        <dbReference type="ChEBI" id="CHEBI:58349"/>
    </ligand>
</feature>
<feature type="site" description="Important for activity" evidence="1">
    <location>
        <position position="269"/>
    </location>
</feature>
<feature type="modified residue" description="N-acetylmethionine" evidence="3">
    <location>
        <position position="1"/>
    </location>
</feature>
<feature type="modified residue" description="Phosphoserine" evidence="7">
    <location>
        <position position="336"/>
    </location>
</feature>
<sequence length="572" mass="64003">MDPRAPRRRHTHQRGYLLTRDPHLNKDLAFTLEERQQLKIHGLLPPCIVNQEIQVLRVIKNFERLNSDFDRYLLLMDLQDRNEKLFYSVLMSNVEKFMPIVYTPTVGLACQQYSLAFRKPRGLFISIHDKGHIASVLNAWPEDVVKAIVVTDGERILGLGDLGCNGMGIPVGKLALYTACGGVNPQQCLPITLDVGTENEELLKDPLYIGLRHRRVRGPEYDAFLDEFMEAASSKYGMNCLIQFEDFANLNAFRLLNKYRNKYCTFNDDIQGTASVAVAGLLAALRITKNKLSDQTVLFQGAGEAALGIAHLIVMAMEKEGLSKEKARQKIWLVDSKGLIVKGRASLTEEKEVFAHEHEEMKNLEAIVQKIKPTALIGVAAIGGAFTEQILKDMAAFNERPIIFALSNPTSKAECSAEECYKVTKGRAIFASGSPFDPVTLPDGRTLFPGQGNNSYVFPGVALGVVACGLRHINDSVFLTTAEVISQQVSDKHLEEGRLYPPLNTIRDVSLKIAVKIVQDAYKEKMATVYPEPQNKEEFVSSQMYSTNYDQILPDCYSWPEEVQKIQTKVNQ</sequence>
<protein>
    <recommendedName>
        <fullName>NADP-dependent malic enzyme</fullName>
        <shortName>NADP-ME</shortName>
        <ecNumber evidence="4">1.1.1.40</ecNumber>
    </recommendedName>
    <alternativeName>
        <fullName>Malic enzyme 1</fullName>
    </alternativeName>
</protein>
<reference key="1">
    <citation type="journal article" date="1989" name="Endocr. Res.">
        <title>Coding nucleotide sequence of rat malic enzyme mRNA and tissue specific regulation by thyroid hormone.</title>
        <authorList>
            <person name="Nikodem V.M."/>
            <person name="Magnuson M.A."/>
            <person name="Dozin B."/>
            <person name="Morioka H."/>
        </authorList>
    </citation>
    <scope>NUCLEOTIDE SEQUENCE [MRNA]</scope>
    <scope>PARTIAL PROTEIN SEQUENCE</scope>
</reference>
<reference key="2">
    <citation type="journal article" date="1986" name="J. Biol. Chem.">
        <title>Coding nucleotide sequence of rat liver malic enzyme mRNA.</title>
        <authorList>
            <person name="Magnuson M.A."/>
            <person name="Morioka H."/>
            <person name="Tecce M.F."/>
            <person name="Nikodem V.M."/>
        </authorList>
    </citation>
    <scope>PRELIMINARY NUCLEOTIDE SEQUENCE</scope>
    <source>
        <strain>Sprague-Dawley</strain>
    </source>
</reference>
<reference key="3">
    <citation type="journal article" date="1988" name="Mol. Cell. Biol.">
        <title>Structural and functional analysis of the rat malic enzyme gene promoter.</title>
        <authorList>
            <person name="Morioka H."/>
            <person name="Tennyson G.E."/>
            <person name="Nikodem V.M."/>
        </authorList>
    </citation>
    <scope>NUCLEOTIDE SEQUENCE [GENOMIC DNA] OF 1-35</scope>
</reference>
<reference key="4">
    <citation type="submission" date="2007-04" db="UniProtKB">
        <authorList>
            <person name="Lubec G."/>
            <person name="Afjehi-Sadat L."/>
            <person name="Chen W.-Q."/>
        </authorList>
    </citation>
    <scope>PROTEIN SEQUENCE OF 15-20; 27-35; 65-81; 147-155; 263-286; 428-445 AND 499-507</scope>
    <scope>IDENTIFICATION BY MASS SPECTROMETRY</scope>
    <source>
        <strain>Sprague-Dawley</strain>
        <tissue>Hippocampus</tissue>
        <tissue>Spinal cord</tissue>
    </source>
</reference>
<reference key="5">
    <citation type="journal article" date="1989" name="Proc. Natl. Acad. Sci. U.S.A.">
        <title>Structural characterization of the rat malic enzyme gene.</title>
        <authorList>
            <person name="Morioka H."/>
            <person name="Magnuson M.A."/>
            <person name="Mitsuhashi T."/>
            <person name="Song M.-K.H."/>
            <person name="Rall J.E."/>
            <person name="Nikodem V.M."/>
        </authorList>
    </citation>
    <scope>PARTIAL PROTEIN SEQUENCE</scope>
</reference>
<reference key="6">
    <citation type="journal article" date="1985" name="Biochemistry">
        <title>Tissue-specific regulation of two functional malic enzyme mRNAs by triiodothyronine.</title>
        <authorList>
            <person name="Dozin B."/>
            <person name="Magnuson M.A."/>
            <person name="Nikodem V.M."/>
        </authorList>
    </citation>
    <scope>FUNCTION</scope>
    <scope>CATALYTIC ACTIVITY</scope>
    <scope>TISSUE SPECIFICITY</scope>
    <scope>SUBCELLULAR LOCATION</scope>
</reference>
<reference key="7">
    <citation type="journal article" date="2012" name="Nat. Commun.">
        <title>Quantitative maps of protein phosphorylation sites across 14 different rat organs and tissues.</title>
        <authorList>
            <person name="Lundby A."/>
            <person name="Secher A."/>
            <person name="Lage K."/>
            <person name="Nordsborg N.B."/>
            <person name="Dmytriyev A."/>
            <person name="Lundby C."/>
            <person name="Olsen J.V."/>
        </authorList>
    </citation>
    <scope>PHOSPHORYLATION [LARGE SCALE ANALYSIS] AT SER-336</scope>
    <scope>IDENTIFICATION BY MASS SPECTROMETRY [LARGE SCALE ANALYSIS]</scope>
</reference>
<name>MAOX_RAT</name>
<evidence type="ECO:0000250" key="1"/>
<evidence type="ECO:0000250" key="2">
    <source>
        <dbReference type="UniProtKB" id="P23368"/>
    </source>
</evidence>
<evidence type="ECO:0000250" key="3">
    <source>
        <dbReference type="UniProtKB" id="P48163"/>
    </source>
</evidence>
<evidence type="ECO:0000269" key="4">
    <source>
    </source>
</evidence>
<evidence type="ECO:0000305" key="5"/>
<evidence type="ECO:0000305" key="6">
    <source>
    </source>
</evidence>
<evidence type="ECO:0007744" key="7">
    <source>
    </source>
</evidence>
<gene>
    <name type="primary">Me1</name>
    <name type="synonym">Mod-1</name>
    <name type="synonym">Mod1</name>
</gene>
<comment type="function">
    <text evidence="4">Catalyzes the oxidative decarboxylation of (S)-malate in the presence of NADP(+) and divalent metal ions, and decarboxylation of oxaloacetate.</text>
</comment>
<comment type="catalytic activity">
    <reaction evidence="4">
        <text>(S)-malate + NADP(+) = pyruvate + CO2 + NADPH</text>
        <dbReference type="Rhea" id="RHEA:18253"/>
        <dbReference type="ChEBI" id="CHEBI:15361"/>
        <dbReference type="ChEBI" id="CHEBI:15589"/>
        <dbReference type="ChEBI" id="CHEBI:16526"/>
        <dbReference type="ChEBI" id="CHEBI:57783"/>
        <dbReference type="ChEBI" id="CHEBI:58349"/>
        <dbReference type="EC" id="1.1.1.40"/>
    </reaction>
    <physiologicalReaction direction="left-to-right" evidence="6">
        <dbReference type="Rhea" id="RHEA:18254"/>
    </physiologicalReaction>
    <physiologicalReaction direction="right-to-left" evidence="3">
        <dbReference type="Rhea" id="RHEA:18255"/>
    </physiologicalReaction>
</comment>
<comment type="catalytic activity">
    <reaction evidence="3">
        <text>oxaloacetate + H(+) = pyruvate + CO2</text>
        <dbReference type="Rhea" id="RHEA:15641"/>
        <dbReference type="ChEBI" id="CHEBI:15361"/>
        <dbReference type="ChEBI" id="CHEBI:15378"/>
        <dbReference type="ChEBI" id="CHEBI:16452"/>
        <dbReference type="ChEBI" id="CHEBI:16526"/>
        <dbReference type="EC" id="1.1.1.40"/>
    </reaction>
    <physiologicalReaction direction="left-to-right" evidence="3">
        <dbReference type="Rhea" id="RHEA:15642"/>
    </physiologicalReaction>
</comment>
<comment type="cofactor">
    <cofactor evidence="3">
        <name>Mg(2+)</name>
        <dbReference type="ChEBI" id="CHEBI:18420"/>
    </cofactor>
    <cofactor evidence="3">
        <name>Mn(2+)</name>
        <dbReference type="ChEBI" id="CHEBI:29035"/>
    </cofactor>
    <text evidence="3">Divalent metal cations. Prefers magnesium or manganese.</text>
</comment>
<comment type="subunit">
    <text evidence="3">Homotetramer.</text>
</comment>
<comment type="subcellular location">
    <subcellularLocation>
        <location evidence="6">Cytoplasm</location>
    </subcellularLocation>
</comment>
<comment type="tissue specificity">
    <text evidence="4">Ubiquitous (PubMed:2416344). Up-regulated by 3,5,3'-triiodo-L-thyronine in the liver, kidney and heart (PubMed:2416344).</text>
</comment>
<comment type="similarity">
    <text evidence="5">Belongs to the malic enzymes family.</text>
</comment>
<keyword id="KW-0007">Acetylation</keyword>
<keyword id="KW-0963">Cytoplasm</keyword>
<keyword id="KW-0903">Direct protein sequencing</keyword>
<keyword id="KW-0479">Metal-binding</keyword>
<keyword id="KW-0521">NADP</keyword>
<keyword id="KW-0560">Oxidoreductase</keyword>
<keyword id="KW-0597">Phosphoprotein</keyword>
<keyword id="KW-1185">Reference proteome</keyword>
<organism>
    <name type="scientific">Rattus norvegicus</name>
    <name type="common">Rat</name>
    <dbReference type="NCBI Taxonomy" id="10116"/>
    <lineage>
        <taxon>Eukaryota</taxon>
        <taxon>Metazoa</taxon>
        <taxon>Chordata</taxon>
        <taxon>Craniata</taxon>
        <taxon>Vertebrata</taxon>
        <taxon>Euteleostomi</taxon>
        <taxon>Mammalia</taxon>
        <taxon>Eutheria</taxon>
        <taxon>Euarchontoglires</taxon>
        <taxon>Glires</taxon>
        <taxon>Rodentia</taxon>
        <taxon>Myomorpha</taxon>
        <taxon>Muroidea</taxon>
        <taxon>Muridae</taxon>
        <taxon>Murinae</taxon>
        <taxon>Rattus</taxon>
    </lineage>
</organism>
<proteinExistence type="evidence at protein level"/>